<protein>
    <recommendedName>
        <fullName evidence="1">Uracil-DNA glycosylase</fullName>
        <shortName evidence="1">UDG</shortName>
        <ecNumber evidence="1">3.2.2.27</ecNumber>
    </recommendedName>
</protein>
<feature type="chain" id="PRO_1000203376" description="Uracil-DNA glycosylase">
    <location>
        <begin position="1"/>
        <end position="224"/>
    </location>
</feature>
<feature type="active site" description="Proton acceptor" evidence="1">
    <location>
        <position position="64"/>
    </location>
</feature>
<comment type="function">
    <text evidence="1">Excises uracil residues from the DNA which can arise as a result of misincorporation of dUMP residues by DNA polymerase or due to deamination of cytosine.</text>
</comment>
<comment type="catalytic activity">
    <reaction evidence="1">
        <text>Hydrolyzes single-stranded DNA or mismatched double-stranded DNA and polynucleotides, releasing free uracil.</text>
        <dbReference type="EC" id="3.2.2.27"/>
    </reaction>
</comment>
<comment type="subcellular location">
    <subcellularLocation>
        <location evidence="1">Cytoplasm</location>
    </subcellularLocation>
</comment>
<comment type="similarity">
    <text evidence="1">Belongs to the uracil-DNA glycosylase (UDG) superfamily. UNG family.</text>
</comment>
<organism>
    <name type="scientific">Geobacillus sp. (strain WCH70)</name>
    <dbReference type="NCBI Taxonomy" id="471223"/>
    <lineage>
        <taxon>Bacteria</taxon>
        <taxon>Bacillati</taxon>
        <taxon>Bacillota</taxon>
        <taxon>Bacilli</taxon>
        <taxon>Bacillales</taxon>
        <taxon>Anoxybacillaceae</taxon>
        <taxon>Geobacillus</taxon>
    </lineage>
</organism>
<gene>
    <name evidence="1" type="primary">ung</name>
    <name type="ordered locus">GWCH70_3371</name>
</gene>
<evidence type="ECO:0000255" key="1">
    <source>
        <dbReference type="HAMAP-Rule" id="MF_00148"/>
    </source>
</evidence>
<reference key="1">
    <citation type="submission" date="2009-06" db="EMBL/GenBank/DDBJ databases">
        <title>Complete sequence of chromosome of Geopacillus sp. WCH70.</title>
        <authorList>
            <consortium name="US DOE Joint Genome Institute"/>
            <person name="Lucas S."/>
            <person name="Copeland A."/>
            <person name="Lapidus A."/>
            <person name="Glavina del Rio T."/>
            <person name="Dalin E."/>
            <person name="Tice H."/>
            <person name="Bruce D."/>
            <person name="Goodwin L."/>
            <person name="Pitluck S."/>
            <person name="Chertkov O."/>
            <person name="Brettin T."/>
            <person name="Detter J.C."/>
            <person name="Han C."/>
            <person name="Larimer F."/>
            <person name="Land M."/>
            <person name="Hauser L."/>
            <person name="Kyrpides N."/>
            <person name="Mikhailova N."/>
            <person name="Brumm P."/>
            <person name="Mead D.A."/>
            <person name="Richardson P."/>
        </authorList>
    </citation>
    <scope>NUCLEOTIDE SEQUENCE [LARGE SCALE GENOMIC DNA]</scope>
    <source>
        <strain>WCH70</strain>
    </source>
</reference>
<dbReference type="EC" id="3.2.2.27" evidence="1"/>
<dbReference type="EMBL" id="CP001638">
    <property type="protein sequence ID" value="ACS26011.1"/>
    <property type="molecule type" value="Genomic_DNA"/>
</dbReference>
<dbReference type="SMR" id="C5D9T3"/>
<dbReference type="STRING" id="471223.GWCH70_3371"/>
<dbReference type="KEGG" id="gwc:GWCH70_3371"/>
<dbReference type="eggNOG" id="COG0692">
    <property type="taxonomic scope" value="Bacteria"/>
</dbReference>
<dbReference type="HOGENOM" id="CLU_032162_3_0_9"/>
<dbReference type="OrthoDB" id="9804372at2"/>
<dbReference type="GO" id="GO:0005737">
    <property type="term" value="C:cytoplasm"/>
    <property type="evidence" value="ECO:0007669"/>
    <property type="project" value="UniProtKB-SubCell"/>
</dbReference>
<dbReference type="GO" id="GO:0004844">
    <property type="term" value="F:uracil DNA N-glycosylase activity"/>
    <property type="evidence" value="ECO:0007669"/>
    <property type="project" value="UniProtKB-UniRule"/>
</dbReference>
<dbReference type="GO" id="GO:0097510">
    <property type="term" value="P:base-excision repair, AP site formation via deaminated base removal"/>
    <property type="evidence" value="ECO:0007669"/>
    <property type="project" value="TreeGrafter"/>
</dbReference>
<dbReference type="CDD" id="cd10027">
    <property type="entry name" value="UDG-F1-like"/>
    <property type="match status" value="1"/>
</dbReference>
<dbReference type="FunFam" id="3.40.470.10:FF:000001">
    <property type="entry name" value="Uracil-DNA glycosylase"/>
    <property type="match status" value="1"/>
</dbReference>
<dbReference type="Gene3D" id="3.40.470.10">
    <property type="entry name" value="Uracil-DNA glycosylase-like domain"/>
    <property type="match status" value="1"/>
</dbReference>
<dbReference type="HAMAP" id="MF_00148">
    <property type="entry name" value="UDG"/>
    <property type="match status" value="1"/>
</dbReference>
<dbReference type="InterPro" id="IPR002043">
    <property type="entry name" value="UDG_fam1"/>
</dbReference>
<dbReference type="InterPro" id="IPR018085">
    <property type="entry name" value="Ura-DNA_Glyclase_AS"/>
</dbReference>
<dbReference type="InterPro" id="IPR005122">
    <property type="entry name" value="Uracil-DNA_glycosylase-like"/>
</dbReference>
<dbReference type="InterPro" id="IPR036895">
    <property type="entry name" value="Uracil-DNA_glycosylase-like_sf"/>
</dbReference>
<dbReference type="NCBIfam" id="NF003588">
    <property type="entry name" value="PRK05254.1-1"/>
    <property type="match status" value="1"/>
</dbReference>
<dbReference type="NCBIfam" id="NF003589">
    <property type="entry name" value="PRK05254.1-2"/>
    <property type="match status" value="1"/>
</dbReference>
<dbReference type="NCBIfam" id="NF003591">
    <property type="entry name" value="PRK05254.1-4"/>
    <property type="match status" value="1"/>
</dbReference>
<dbReference type="NCBIfam" id="NF003592">
    <property type="entry name" value="PRK05254.1-5"/>
    <property type="match status" value="1"/>
</dbReference>
<dbReference type="NCBIfam" id="TIGR00628">
    <property type="entry name" value="ung"/>
    <property type="match status" value="1"/>
</dbReference>
<dbReference type="PANTHER" id="PTHR11264">
    <property type="entry name" value="URACIL-DNA GLYCOSYLASE"/>
    <property type="match status" value="1"/>
</dbReference>
<dbReference type="PANTHER" id="PTHR11264:SF0">
    <property type="entry name" value="URACIL-DNA GLYCOSYLASE"/>
    <property type="match status" value="1"/>
</dbReference>
<dbReference type="Pfam" id="PF03167">
    <property type="entry name" value="UDG"/>
    <property type="match status" value="1"/>
</dbReference>
<dbReference type="SMART" id="SM00986">
    <property type="entry name" value="UDG"/>
    <property type="match status" value="1"/>
</dbReference>
<dbReference type="SMART" id="SM00987">
    <property type="entry name" value="UreE_C"/>
    <property type="match status" value="1"/>
</dbReference>
<dbReference type="SUPFAM" id="SSF52141">
    <property type="entry name" value="Uracil-DNA glycosylase-like"/>
    <property type="match status" value="1"/>
</dbReference>
<dbReference type="PROSITE" id="PS00130">
    <property type="entry name" value="U_DNA_GLYCOSYLASE"/>
    <property type="match status" value="1"/>
</dbReference>
<accession>C5D9T3</accession>
<sequence>MAILKNDWAPLLEEEFHKPYYIKLREFLKEEYRTRTIYPDMYDIFNALHYTPYAQVKVVILGQDPYHGPGQAHGLSFSVKPGVPIPPSLANIFKELHDDLGCYIPNNGYLVKWAKQGVLLLNTVLTVRRGEANSHKGKGWEFFTDRVIELVNEKEDPVVFLLWGRHAQAKKELITNPRHHIIEAPHPSPFSAARGFFGHRPFSRTNAFLQKVGREPIDWQIENI</sequence>
<name>UNG_GEOSW</name>
<proteinExistence type="inferred from homology"/>
<keyword id="KW-0963">Cytoplasm</keyword>
<keyword id="KW-0227">DNA damage</keyword>
<keyword id="KW-0234">DNA repair</keyword>
<keyword id="KW-0378">Hydrolase</keyword>